<protein>
    <recommendedName>
        <fullName evidence="2">tRNA N6-adenosine threonylcarbamoyltransferase</fullName>
        <ecNumber evidence="2">2.3.1.234</ecNumber>
    </recommendedName>
    <alternativeName>
        <fullName>N6-L-threonylcarbamoyladenine synthase</fullName>
        <shortName>t(6)A synthase</shortName>
    </alternativeName>
    <alternativeName>
        <fullName evidence="2">O-sialoglycoprotein endopeptidase</fullName>
    </alternativeName>
    <alternativeName>
        <fullName evidence="2">t(6)A37 threonylcarbamoyladenosine biosynthesis protein Osgep</fullName>
    </alternativeName>
    <alternativeName>
        <fullName evidence="2">tRNA threonylcarbamoyladenosine biosynthesis protein Osgep</fullName>
    </alternativeName>
</protein>
<sequence>MPAVLGFEGSANKIGVGVVRDGTVLANPRRTYVTAPGTGFLPGDTARHHRAVILDLLQEALAEAGLTSKDIDCIAFTKGPGMGAPLASVAVVARTVAQLWNKPLLGVNHCIGHIEMGRLITGAVNPTVLYVSGGNTQVISYSEHRYRIFGETIDIAVGNCLDRFARVLKISNDPSPGYNIEQMAKRGKKLVELPYTVKGMDVSFSGILSFIEDAAQRMLATGECTPEDLCFSLQETVFAMLVEITERAMAHCGSKEALIVGGVGCNLRLQEMMGTMCQERGAQLFATDERFCVDNGAMIAQAGWEMFQAGHRTPLKDSAITQRYRTDEVEVTWRD</sequence>
<feature type="chain" id="PRO_0000096985" description="tRNA N6-adenosine threonylcarbamoyltransferase">
    <location>
        <begin position="1"/>
        <end position="335"/>
    </location>
</feature>
<feature type="binding site" evidence="2">
    <location>
        <position position="109"/>
    </location>
    <ligand>
        <name>a divalent metal cation</name>
        <dbReference type="ChEBI" id="CHEBI:60240"/>
    </ligand>
</feature>
<feature type="binding site" evidence="2">
    <location>
        <position position="113"/>
    </location>
    <ligand>
        <name>a divalent metal cation</name>
        <dbReference type="ChEBI" id="CHEBI:60240"/>
    </ligand>
</feature>
<feature type="binding site" evidence="2">
    <location>
        <begin position="130"/>
        <end position="134"/>
    </location>
    <ligand>
        <name>substrate</name>
    </ligand>
</feature>
<feature type="binding site" evidence="2">
    <location>
        <position position="130"/>
    </location>
    <ligand>
        <name>a divalent metal cation</name>
        <dbReference type="ChEBI" id="CHEBI:60240"/>
    </ligand>
</feature>
<feature type="binding site" evidence="2">
    <location>
        <position position="162"/>
    </location>
    <ligand>
        <name>substrate</name>
    </ligand>
</feature>
<feature type="binding site" evidence="2">
    <location>
        <position position="177"/>
    </location>
    <ligand>
        <name>substrate</name>
    </ligand>
</feature>
<feature type="binding site" evidence="2">
    <location>
        <position position="181"/>
    </location>
    <ligand>
        <name>substrate</name>
    </ligand>
</feature>
<feature type="binding site" evidence="2">
    <location>
        <position position="266"/>
    </location>
    <ligand>
        <name>substrate</name>
    </ligand>
</feature>
<feature type="binding site" evidence="2">
    <location>
        <position position="294"/>
    </location>
    <ligand>
        <name>a divalent metal cation</name>
        <dbReference type="ChEBI" id="CHEBI:60240"/>
    </ligand>
</feature>
<feature type="sequence conflict" description="In Ref. 1; BAC34005." evidence="5" ref="1">
    <original>A</original>
    <variation>T</variation>
    <location>
        <position position="62"/>
    </location>
</feature>
<feature type="sequence conflict" description="In Ref. 1; BAC34005." evidence="5" ref="1">
    <original>A</original>
    <variation>S</variation>
    <location>
        <position position="84"/>
    </location>
</feature>
<name>OSGEP_MOUSE</name>
<reference key="1">
    <citation type="journal article" date="2005" name="Science">
        <title>The transcriptional landscape of the mammalian genome.</title>
        <authorList>
            <person name="Carninci P."/>
            <person name="Kasukawa T."/>
            <person name="Katayama S."/>
            <person name="Gough J."/>
            <person name="Frith M.C."/>
            <person name="Maeda N."/>
            <person name="Oyama R."/>
            <person name="Ravasi T."/>
            <person name="Lenhard B."/>
            <person name="Wells C."/>
            <person name="Kodzius R."/>
            <person name="Shimokawa K."/>
            <person name="Bajic V.B."/>
            <person name="Brenner S.E."/>
            <person name="Batalov S."/>
            <person name="Forrest A.R."/>
            <person name="Zavolan M."/>
            <person name="Davis M.J."/>
            <person name="Wilming L.G."/>
            <person name="Aidinis V."/>
            <person name="Allen J.E."/>
            <person name="Ambesi-Impiombato A."/>
            <person name="Apweiler R."/>
            <person name="Aturaliya R.N."/>
            <person name="Bailey T.L."/>
            <person name="Bansal M."/>
            <person name="Baxter L."/>
            <person name="Beisel K.W."/>
            <person name="Bersano T."/>
            <person name="Bono H."/>
            <person name="Chalk A.M."/>
            <person name="Chiu K.P."/>
            <person name="Choudhary V."/>
            <person name="Christoffels A."/>
            <person name="Clutterbuck D.R."/>
            <person name="Crowe M.L."/>
            <person name="Dalla E."/>
            <person name="Dalrymple B.P."/>
            <person name="de Bono B."/>
            <person name="Della Gatta G."/>
            <person name="di Bernardo D."/>
            <person name="Down T."/>
            <person name="Engstrom P."/>
            <person name="Fagiolini M."/>
            <person name="Faulkner G."/>
            <person name="Fletcher C.F."/>
            <person name="Fukushima T."/>
            <person name="Furuno M."/>
            <person name="Futaki S."/>
            <person name="Gariboldi M."/>
            <person name="Georgii-Hemming P."/>
            <person name="Gingeras T.R."/>
            <person name="Gojobori T."/>
            <person name="Green R.E."/>
            <person name="Gustincich S."/>
            <person name="Harbers M."/>
            <person name="Hayashi Y."/>
            <person name="Hensch T.K."/>
            <person name="Hirokawa N."/>
            <person name="Hill D."/>
            <person name="Huminiecki L."/>
            <person name="Iacono M."/>
            <person name="Ikeo K."/>
            <person name="Iwama A."/>
            <person name="Ishikawa T."/>
            <person name="Jakt M."/>
            <person name="Kanapin A."/>
            <person name="Katoh M."/>
            <person name="Kawasawa Y."/>
            <person name="Kelso J."/>
            <person name="Kitamura H."/>
            <person name="Kitano H."/>
            <person name="Kollias G."/>
            <person name="Krishnan S.P."/>
            <person name="Kruger A."/>
            <person name="Kummerfeld S.K."/>
            <person name="Kurochkin I.V."/>
            <person name="Lareau L.F."/>
            <person name="Lazarevic D."/>
            <person name="Lipovich L."/>
            <person name="Liu J."/>
            <person name="Liuni S."/>
            <person name="McWilliam S."/>
            <person name="Madan Babu M."/>
            <person name="Madera M."/>
            <person name="Marchionni L."/>
            <person name="Matsuda H."/>
            <person name="Matsuzawa S."/>
            <person name="Miki H."/>
            <person name="Mignone F."/>
            <person name="Miyake S."/>
            <person name="Morris K."/>
            <person name="Mottagui-Tabar S."/>
            <person name="Mulder N."/>
            <person name="Nakano N."/>
            <person name="Nakauchi H."/>
            <person name="Ng P."/>
            <person name="Nilsson R."/>
            <person name="Nishiguchi S."/>
            <person name="Nishikawa S."/>
            <person name="Nori F."/>
            <person name="Ohara O."/>
            <person name="Okazaki Y."/>
            <person name="Orlando V."/>
            <person name="Pang K.C."/>
            <person name="Pavan W.J."/>
            <person name="Pavesi G."/>
            <person name="Pesole G."/>
            <person name="Petrovsky N."/>
            <person name="Piazza S."/>
            <person name="Reed J."/>
            <person name="Reid J.F."/>
            <person name="Ring B.Z."/>
            <person name="Ringwald M."/>
            <person name="Rost B."/>
            <person name="Ruan Y."/>
            <person name="Salzberg S.L."/>
            <person name="Sandelin A."/>
            <person name="Schneider C."/>
            <person name="Schoenbach C."/>
            <person name="Sekiguchi K."/>
            <person name="Semple C.A."/>
            <person name="Seno S."/>
            <person name="Sessa L."/>
            <person name="Sheng Y."/>
            <person name="Shibata Y."/>
            <person name="Shimada H."/>
            <person name="Shimada K."/>
            <person name="Silva D."/>
            <person name="Sinclair B."/>
            <person name="Sperling S."/>
            <person name="Stupka E."/>
            <person name="Sugiura K."/>
            <person name="Sultana R."/>
            <person name="Takenaka Y."/>
            <person name="Taki K."/>
            <person name="Tammoja K."/>
            <person name="Tan S.L."/>
            <person name="Tang S."/>
            <person name="Taylor M.S."/>
            <person name="Tegner J."/>
            <person name="Teichmann S.A."/>
            <person name="Ueda H.R."/>
            <person name="van Nimwegen E."/>
            <person name="Verardo R."/>
            <person name="Wei C.L."/>
            <person name="Yagi K."/>
            <person name="Yamanishi H."/>
            <person name="Zabarovsky E."/>
            <person name="Zhu S."/>
            <person name="Zimmer A."/>
            <person name="Hide W."/>
            <person name="Bult C."/>
            <person name="Grimmond S.M."/>
            <person name="Teasdale R.D."/>
            <person name="Liu E.T."/>
            <person name="Brusic V."/>
            <person name="Quackenbush J."/>
            <person name="Wahlestedt C."/>
            <person name="Mattick J.S."/>
            <person name="Hume D.A."/>
            <person name="Kai C."/>
            <person name="Sasaki D."/>
            <person name="Tomaru Y."/>
            <person name="Fukuda S."/>
            <person name="Kanamori-Katayama M."/>
            <person name="Suzuki M."/>
            <person name="Aoki J."/>
            <person name="Arakawa T."/>
            <person name="Iida J."/>
            <person name="Imamura K."/>
            <person name="Itoh M."/>
            <person name="Kato T."/>
            <person name="Kawaji H."/>
            <person name="Kawagashira N."/>
            <person name="Kawashima T."/>
            <person name="Kojima M."/>
            <person name="Kondo S."/>
            <person name="Konno H."/>
            <person name="Nakano K."/>
            <person name="Ninomiya N."/>
            <person name="Nishio T."/>
            <person name="Okada M."/>
            <person name="Plessy C."/>
            <person name="Shibata K."/>
            <person name="Shiraki T."/>
            <person name="Suzuki S."/>
            <person name="Tagami M."/>
            <person name="Waki K."/>
            <person name="Watahiki A."/>
            <person name="Okamura-Oho Y."/>
            <person name="Suzuki H."/>
            <person name="Kawai J."/>
            <person name="Hayashizaki Y."/>
        </authorList>
    </citation>
    <scope>NUCLEOTIDE SEQUENCE [LARGE SCALE MRNA]</scope>
    <source>
        <strain>C57BL/6J</strain>
        <tissue>Hippocampus</tissue>
    </source>
</reference>
<reference key="2">
    <citation type="journal article" date="2004" name="Genome Res.">
        <title>The status, quality, and expansion of the NIH full-length cDNA project: the Mammalian Gene Collection (MGC).</title>
        <authorList>
            <consortium name="The MGC Project Team"/>
        </authorList>
    </citation>
    <scope>NUCLEOTIDE SEQUENCE [LARGE SCALE MRNA]</scope>
    <source>
        <tissue>Mammary tumor</tissue>
    </source>
</reference>
<reference key="3">
    <citation type="journal article" date="2002" name="Biochem. Biophys. Res. Commun.">
        <title>Identification of the functional elements in the bidirectional promoter of the mouse O-sialoglycoprotein endopeptidase and APEX nuclease genes.</title>
        <authorList>
            <person name="Ikeda S."/>
            <person name="Ayabe H."/>
            <person name="Mori K."/>
            <person name="Seki Y."/>
            <person name="Seki S."/>
        </authorList>
    </citation>
    <scope>TISSUE SPECIFICITY</scope>
    <scope>DEVELOPMENTAL STAGE</scope>
</reference>
<reference key="4">
    <citation type="journal article" date="2010" name="Cell">
        <title>A tissue-specific atlas of mouse protein phosphorylation and expression.</title>
        <authorList>
            <person name="Huttlin E.L."/>
            <person name="Jedrychowski M.P."/>
            <person name="Elias J.E."/>
            <person name="Goswami T."/>
            <person name="Rad R."/>
            <person name="Beausoleil S.A."/>
            <person name="Villen J."/>
            <person name="Haas W."/>
            <person name="Sowa M.E."/>
            <person name="Gygi S.P."/>
        </authorList>
    </citation>
    <scope>IDENTIFICATION BY MASS SPECTROMETRY [LARGE SCALE ANALYSIS]</scope>
    <source>
        <tissue>Brain</tissue>
        <tissue>Brown adipose tissue</tissue>
        <tissue>Heart</tissue>
        <tissue>Kidney</tissue>
        <tissue>Liver</tissue>
        <tissue>Lung</tissue>
        <tissue>Spleen</tissue>
        <tissue>Testis</tissue>
    </source>
</reference>
<reference key="5">
    <citation type="journal article" date="2017" name="Nat. Genet.">
        <title>Mutations in KEOPS-complex genes cause nephrotic syndrome with primary microcephaly.</title>
        <authorList>
            <person name="Braun D.A."/>
            <person name="Rao J."/>
            <person name="Mollet G."/>
            <person name="Schapiro D."/>
            <person name="Daugeron M.C."/>
            <person name="Tan W."/>
            <person name="Gribouval O."/>
            <person name="Boyer O."/>
            <person name="Revy P."/>
            <person name="Jobst-Schwan T."/>
            <person name="Schmidt J.M."/>
            <person name="Lawson J.A."/>
            <person name="Schanze D."/>
            <person name="Ashraf S."/>
            <person name="Ullmann J.F.P."/>
            <person name="Hoogstraten C.A."/>
            <person name="Boddaert N."/>
            <person name="Collinet B."/>
            <person name="Martin G."/>
            <person name="Liger D."/>
            <person name="Lovric S."/>
            <person name="Furlano M."/>
            <person name="Guerrera I.C."/>
            <person name="Sanchez-Ferras O."/>
            <person name="Hu J.F."/>
            <person name="Boschat A.C."/>
            <person name="Sanquer S."/>
            <person name="Menten B."/>
            <person name="Vergult S."/>
            <person name="De Rocker N."/>
            <person name="Airik M."/>
            <person name="Hermle T."/>
            <person name="Shril S."/>
            <person name="Widmeier E."/>
            <person name="Gee H.Y."/>
            <person name="Choi W.I."/>
            <person name="Sadowski C.E."/>
            <person name="Pabst W.L."/>
            <person name="Warejko J.K."/>
            <person name="Daga A."/>
            <person name="Basta T."/>
            <person name="Matejas V."/>
            <person name="Scharmann K."/>
            <person name="Kienast S.D."/>
            <person name="Behnam B."/>
            <person name="Beeson B."/>
            <person name="Begtrup A."/>
            <person name="Bruce M."/>
            <person name="Ch'ng G.S."/>
            <person name="Lin S.P."/>
            <person name="Chang J.H."/>
            <person name="Chen C.H."/>
            <person name="Cho M.T."/>
            <person name="Gaffney P.M."/>
            <person name="Gipson P.E."/>
            <person name="Hsu C.H."/>
            <person name="Kari J.A."/>
            <person name="Ke Y.Y."/>
            <person name="Kiraly-Borri C."/>
            <person name="Lai W.M."/>
            <person name="Lemyre E."/>
            <person name="Littlejohn R.O."/>
            <person name="Masri A."/>
            <person name="Moghtaderi M."/>
            <person name="Nakamura K."/>
            <person name="Ozaltin F."/>
            <person name="Praet M."/>
            <person name="Prasad C."/>
            <person name="Prytula A."/>
            <person name="Roeder E.R."/>
            <person name="Rump P."/>
            <person name="Schnur R.E."/>
            <person name="Shiihara T."/>
            <person name="Sinha M.D."/>
            <person name="Soliman N.A."/>
            <person name="Soulami K."/>
            <person name="Sweetser D.A."/>
            <person name="Tsai W.H."/>
            <person name="Tsai J.D."/>
            <person name="Topaloglu R."/>
            <person name="Vester U."/>
            <person name="Viskochil D.H."/>
            <person name="Vatanavicharn N."/>
            <person name="Waxler J.L."/>
            <person name="Wierenga K.J."/>
            <person name="Wolf M.T.F."/>
            <person name="Wong S.N."/>
            <person name="Leidel S.A."/>
            <person name="Truglio G."/>
            <person name="Dedon P.C."/>
            <person name="Poduri A."/>
            <person name="Mane S."/>
            <person name="Lifton R.P."/>
            <person name="Bouchard M."/>
            <person name="Kannu P."/>
            <person name="Chitayat D."/>
            <person name="Magen D."/>
            <person name="Callewaert B."/>
            <person name="van Tilbeurgh H."/>
            <person name="Zenker M."/>
            <person name="Antignac C."/>
            <person name="Hildebrandt F."/>
        </authorList>
    </citation>
    <scope>DISRUPTION PHENOTYPE</scope>
</reference>
<keyword id="KW-0012">Acyltransferase</keyword>
<keyword id="KW-0963">Cytoplasm</keyword>
<keyword id="KW-0479">Metal-binding</keyword>
<keyword id="KW-0539">Nucleus</keyword>
<keyword id="KW-1185">Reference proteome</keyword>
<keyword id="KW-0808">Transferase</keyword>
<keyword id="KW-0819">tRNA processing</keyword>
<gene>
    <name type="primary">Osgep</name>
</gene>
<proteinExistence type="evidence at protein level"/>
<organism>
    <name type="scientific">Mus musculus</name>
    <name type="common">Mouse</name>
    <dbReference type="NCBI Taxonomy" id="10090"/>
    <lineage>
        <taxon>Eukaryota</taxon>
        <taxon>Metazoa</taxon>
        <taxon>Chordata</taxon>
        <taxon>Craniata</taxon>
        <taxon>Vertebrata</taxon>
        <taxon>Euteleostomi</taxon>
        <taxon>Mammalia</taxon>
        <taxon>Eutheria</taxon>
        <taxon>Euarchontoglires</taxon>
        <taxon>Glires</taxon>
        <taxon>Rodentia</taxon>
        <taxon>Myomorpha</taxon>
        <taxon>Muroidea</taxon>
        <taxon>Muridae</taxon>
        <taxon>Murinae</taxon>
        <taxon>Mus</taxon>
        <taxon>Mus</taxon>
    </lineage>
</organism>
<accession>Q8BWU5</accession>
<accession>Q99LN8</accession>
<evidence type="ECO:0000250" key="1">
    <source>
        <dbReference type="UniProtKB" id="Q9NPF4"/>
    </source>
</evidence>
<evidence type="ECO:0000255" key="2">
    <source>
        <dbReference type="HAMAP-Rule" id="MF_03180"/>
    </source>
</evidence>
<evidence type="ECO:0000269" key="3">
    <source>
    </source>
</evidence>
<evidence type="ECO:0000269" key="4">
    <source>
    </source>
</evidence>
<evidence type="ECO:0000305" key="5"/>
<dbReference type="EC" id="2.3.1.234" evidence="2"/>
<dbReference type="EMBL" id="AK049955">
    <property type="protein sequence ID" value="BAC34005.1"/>
    <property type="molecule type" value="mRNA"/>
</dbReference>
<dbReference type="EMBL" id="BC002296">
    <property type="protein sequence ID" value="AAH02296.1"/>
    <property type="molecule type" value="mRNA"/>
</dbReference>
<dbReference type="CCDS" id="CCDS27026.1"/>
<dbReference type="RefSeq" id="NP_598437.2">
    <property type="nucleotide sequence ID" value="NM_133676.2"/>
</dbReference>
<dbReference type="SMR" id="Q8BWU5"/>
<dbReference type="BioGRID" id="211324">
    <property type="interactions" value="70"/>
</dbReference>
<dbReference type="FunCoup" id="Q8BWU5">
    <property type="interactions" value="2498"/>
</dbReference>
<dbReference type="IntAct" id="Q8BWU5">
    <property type="interactions" value="46"/>
</dbReference>
<dbReference type="STRING" id="10090.ENSMUSP00000124039"/>
<dbReference type="iPTMnet" id="Q8BWU5"/>
<dbReference type="PhosphoSitePlus" id="Q8BWU5"/>
<dbReference type="PaxDb" id="10090-ENSMUSP00000124039"/>
<dbReference type="ProteomicsDB" id="293529"/>
<dbReference type="Pumba" id="Q8BWU5"/>
<dbReference type="DNASU" id="66246"/>
<dbReference type="GeneID" id="66246"/>
<dbReference type="KEGG" id="mmu:66246"/>
<dbReference type="AGR" id="MGI:1913496"/>
<dbReference type="CTD" id="55644"/>
<dbReference type="MGI" id="MGI:1913496">
    <property type="gene designation" value="Osgep"/>
</dbReference>
<dbReference type="eggNOG" id="KOG2708">
    <property type="taxonomic scope" value="Eukaryota"/>
</dbReference>
<dbReference type="InParanoid" id="Q8BWU5"/>
<dbReference type="OrthoDB" id="10254073at2759"/>
<dbReference type="PhylomeDB" id="Q8BWU5"/>
<dbReference type="TreeFam" id="TF313621"/>
<dbReference type="BioGRID-ORCS" id="66246">
    <property type="hits" value="24 hits in 76 CRISPR screens"/>
</dbReference>
<dbReference type="PRO" id="PR:Q8BWU5"/>
<dbReference type="Proteomes" id="UP000000589">
    <property type="component" value="Unplaced"/>
</dbReference>
<dbReference type="RNAct" id="Q8BWU5">
    <property type="molecule type" value="protein"/>
</dbReference>
<dbReference type="GO" id="GO:0005737">
    <property type="term" value="C:cytoplasm"/>
    <property type="evidence" value="ECO:0000250"/>
    <property type="project" value="UniProtKB"/>
</dbReference>
<dbReference type="GO" id="GO:0000408">
    <property type="term" value="C:EKC/KEOPS complex"/>
    <property type="evidence" value="ECO:0000250"/>
    <property type="project" value="UniProtKB"/>
</dbReference>
<dbReference type="GO" id="GO:0005634">
    <property type="term" value="C:nucleus"/>
    <property type="evidence" value="ECO:0000250"/>
    <property type="project" value="UniProtKB"/>
</dbReference>
<dbReference type="GO" id="GO:0046872">
    <property type="term" value="F:metal ion binding"/>
    <property type="evidence" value="ECO:0007669"/>
    <property type="project" value="UniProtKB-KW"/>
</dbReference>
<dbReference type="GO" id="GO:0061711">
    <property type="term" value="F:N(6)-L-threonylcarbamoyladenine synthase activity"/>
    <property type="evidence" value="ECO:0007669"/>
    <property type="project" value="UniProtKB-EC"/>
</dbReference>
<dbReference type="GO" id="GO:0002949">
    <property type="term" value="P:tRNA threonylcarbamoyladenosine modification"/>
    <property type="evidence" value="ECO:0000250"/>
    <property type="project" value="UniProtKB"/>
</dbReference>
<dbReference type="CDD" id="cd24132">
    <property type="entry name" value="ASKHA_NBD_OSGEP_like_euk"/>
    <property type="match status" value="1"/>
</dbReference>
<dbReference type="FunFam" id="3.30.420.40:FF:000038">
    <property type="entry name" value="Probable tRNA N6-adenosine threonylcarbamoyltransferase"/>
    <property type="match status" value="1"/>
</dbReference>
<dbReference type="FunFam" id="3.30.420.40:FF:000295">
    <property type="entry name" value="Probable tRNA N6-adenosine threonylcarbamoyltransferase"/>
    <property type="match status" value="1"/>
</dbReference>
<dbReference type="Gene3D" id="3.30.420.40">
    <property type="match status" value="2"/>
</dbReference>
<dbReference type="HAMAP" id="MF_01446">
    <property type="entry name" value="Kae1"/>
    <property type="match status" value="1"/>
</dbReference>
<dbReference type="InterPro" id="IPR043129">
    <property type="entry name" value="ATPase_NBD"/>
</dbReference>
<dbReference type="InterPro" id="IPR000905">
    <property type="entry name" value="Gcp-like_dom"/>
</dbReference>
<dbReference type="InterPro" id="IPR017861">
    <property type="entry name" value="KAE1/TsaD"/>
</dbReference>
<dbReference type="InterPro" id="IPR034680">
    <property type="entry name" value="Kae1_archaea_euk"/>
</dbReference>
<dbReference type="InterPro" id="IPR017860">
    <property type="entry name" value="Peptidase_M22_CS"/>
</dbReference>
<dbReference type="NCBIfam" id="TIGR03722">
    <property type="entry name" value="arch_KAE1"/>
    <property type="match status" value="1"/>
</dbReference>
<dbReference type="NCBIfam" id="TIGR00329">
    <property type="entry name" value="gcp_kae1"/>
    <property type="match status" value="1"/>
</dbReference>
<dbReference type="PANTHER" id="PTHR11735">
    <property type="entry name" value="TRNA N6-ADENOSINE THREONYLCARBAMOYLTRANSFERASE"/>
    <property type="match status" value="1"/>
</dbReference>
<dbReference type="PANTHER" id="PTHR11735:SF14">
    <property type="entry name" value="TRNA N6-ADENOSINE THREONYLCARBAMOYLTRANSFERASE"/>
    <property type="match status" value="1"/>
</dbReference>
<dbReference type="Pfam" id="PF00814">
    <property type="entry name" value="TsaD"/>
    <property type="match status" value="1"/>
</dbReference>
<dbReference type="PRINTS" id="PR00789">
    <property type="entry name" value="OSIALOPTASE"/>
</dbReference>
<dbReference type="SUPFAM" id="SSF53067">
    <property type="entry name" value="Actin-like ATPase domain"/>
    <property type="match status" value="1"/>
</dbReference>
<dbReference type="PROSITE" id="PS01016">
    <property type="entry name" value="GLYCOPROTEASE"/>
    <property type="match status" value="1"/>
</dbReference>
<comment type="function">
    <text evidence="2">Component of the EKC/KEOPS complex that is required for the formation of a threonylcarbamoyl group on adenosine at position 37 (t(6)A37) in tRNAs that read codons beginning with adenine. The complex is probably involved in the transfer of the threonylcarbamoyl moiety of threonylcarbamoyl-AMP (TC-AMP) to the N6 group of A37. OSGEP likely plays a direct catalytic role in this reaction, but requires other protein(s) of the complex to fulfill this activity.</text>
</comment>
<comment type="catalytic activity">
    <reaction evidence="2">
        <text>L-threonylcarbamoyladenylate + adenosine(37) in tRNA = N(6)-L-threonylcarbamoyladenosine(37) in tRNA + AMP + H(+)</text>
        <dbReference type="Rhea" id="RHEA:37059"/>
        <dbReference type="Rhea" id="RHEA-COMP:10162"/>
        <dbReference type="Rhea" id="RHEA-COMP:10163"/>
        <dbReference type="ChEBI" id="CHEBI:15378"/>
        <dbReference type="ChEBI" id="CHEBI:73682"/>
        <dbReference type="ChEBI" id="CHEBI:74411"/>
        <dbReference type="ChEBI" id="CHEBI:74418"/>
        <dbReference type="ChEBI" id="CHEBI:456215"/>
        <dbReference type="EC" id="2.3.1.234"/>
    </reaction>
</comment>
<comment type="cofactor">
    <cofactor evidence="2">
        <name>a divalent metal cation</name>
        <dbReference type="ChEBI" id="CHEBI:60240"/>
    </cofactor>
    <text evidence="2">Binds 1 divalent metal cation per subunit.</text>
</comment>
<comment type="subunit">
    <text evidence="1 2">Component of the EKC/KEOPS complex composed of at least GON7, TP53RK, TPRKB, OSGEP and LAGE3; the whole complex dimerizes.</text>
</comment>
<comment type="subcellular location">
    <subcellularLocation>
        <location evidence="2">Cytoplasm</location>
    </subcellularLocation>
    <subcellularLocation>
        <location evidence="2">Nucleus</location>
    </subcellularLocation>
</comment>
<comment type="tissue specificity">
    <text evidence="3">Widely expressed at low level. Expressed at intermediate level in lung. Weakly expressed in testis, skeletal muscle, kidney, liver, spleen, brain and heart.</text>
</comment>
<comment type="developmental stage">
    <text evidence="3">Weakly expressed in 7, 11 and 17 day embryos. Expressed at a higher level in 15 day embryos.</text>
</comment>
<comment type="disruption phenotype">
    <text evidence="4">Mouse embryos display primary microcephaly characterized by significantly shorter cortex lengths, cortex-midbrain midline lengths and cortex widths. Mice do not show a renal phenotype.</text>
</comment>
<comment type="similarity">
    <text evidence="2">Belongs to the KAE1 / TsaD family.</text>
</comment>